<protein>
    <recommendedName>
        <fullName evidence="1">ADP-L-glycero-D-manno-heptose-6-epimerase</fullName>
        <ecNumber evidence="1">5.1.3.20</ecNumber>
    </recommendedName>
    <alternativeName>
        <fullName evidence="1">ADP-L-glycero-beta-D-manno-heptose-6-epimerase</fullName>
        <shortName evidence="1">ADP-glyceromanno-heptose 6-epimerase</shortName>
        <shortName evidence="1">ADP-hep 6-epimerase</shortName>
        <shortName evidence="1">AGME</shortName>
    </alternativeName>
</protein>
<feature type="chain" id="PRO_0000205811" description="ADP-L-glycero-D-manno-heptose-6-epimerase">
    <location>
        <begin position="1"/>
        <end position="314"/>
    </location>
</feature>
<feature type="active site" description="Proton acceptor" evidence="1">
    <location>
        <position position="139"/>
    </location>
</feature>
<feature type="active site" description="Proton acceptor" evidence="1">
    <location>
        <position position="183"/>
    </location>
</feature>
<feature type="binding site" evidence="1">
    <location>
        <begin position="10"/>
        <end position="11"/>
    </location>
    <ligand>
        <name>NADP(+)</name>
        <dbReference type="ChEBI" id="CHEBI:58349"/>
    </ligand>
</feature>
<feature type="binding site" evidence="1">
    <location>
        <begin position="31"/>
        <end position="32"/>
    </location>
    <ligand>
        <name>NADP(+)</name>
        <dbReference type="ChEBI" id="CHEBI:58349"/>
    </ligand>
</feature>
<feature type="binding site" evidence="1">
    <location>
        <position position="38"/>
    </location>
    <ligand>
        <name>NADP(+)</name>
        <dbReference type="ChEBI" id="CHEBI:58349"/>
    </ligand>
</feature>
<feature type="binding site" evidence="1">
    <location>
        <position position="53"/>
    </location>
    <ligand>
        <name>NADP(+)</name>
        <dbReference type="ChEBI" id="CHEBI:58349"/>
    </ligand>
</feature>
<feature type="binding site" evidence="1">
    <location>
        <begin position="75"/>
        <end position="79"/>
    </location>
    <ligand>
        <name>NADP(+)</name>
        <dbReference type="ChEBI" id="CHEBI:58349"/>
    </ligand>
</feature>
<feature type="binding site" evidence="1">
    <location>
        <position position="92"/>
    </location>
    <ligand>
        <name>NADP(+)</name>
        <dbReference type="ChEBI" id="CHEBI:58349"/>
    </ligand>
</feature>
<feature type="binding site" evidence="1">
    <location>
        <position position="143"/>
    </location>
    <ligand>
        <name>NADP(+)</name>
        <dbReference type="ChEBI" id="CHEBI:58349"/>
    </ligand>
</feature>
<feature type="binding site" evidence="1">
    <location>
        <position position="174"/>
    </location>
    <ligand>
        <name>substrate</name>
    </ligand>
</feature>
<feature type="binding site" evidence="1">
    <location>
        <position position="175"/>
    </location>
    <ligand>
        <name>NADP(+)</name>
        <dbReference type="ChEBI" id="CHEBI:58349"/>
    </ligand>
</feature>
<feature type="binding site" evidence="1">
    <location>
        <position position="183"/>
    </location>
    <ligand>
        <name>NADP(+)</name>
        <dbReference type="ChEBI" id="CHEBI:58349"/>
    </ligand>
</feature>
<feature type="binding site" evidence="1">
    <location>
        <position position="185"/>
    </location>
    <ligand>
        <name>substrate</name>
    </ligand>
</feature>
<feature type="binding site" evidence="1">
    <location>
        <position position="192"/>
    </location>
    <ligand>
        <name>substrate</name>
    </ligand>
</feature>
<feature type="binding site" evidence="1">
    <location>
        <begin position="206"/>
        <end position="209"/>
    </location>
    <ligand>
        <name>substrate</name>
    </ligand>
</feature>
<feature type="binding site" evidence="1">
    <location>
        <position position="214"/>
    </location>
    <ligand>
        <name>substrate</name>
    </ligand>
</feature>
<feature type="binding site" evidence="1">
    <location>
        <position position="277"/>
    </location>
    <ligand>
        <name>substrate</name>
    </ligand>
</feature>
<feature type="sequence variant" description="In strain: 169-98 / Serotype O22.">
    <original>FGFID</original>
    <variation>LGPIE</variation>
    <location>
        <begin position="66"/>
        <end position="70"/>
    </location>
</feature>
<feature type="sequence variant" description="In strain: MO45 / ATCC 51394 / Serotype O139.">
    <original>F</original>
    <variation>S</variation>
    <location>
        <position position="68"/>
    </location>
</feature>
<feature type="sequence variant" description="In strain: 169-98 / Serotype O22.">
    <original>D</original>
    <variation>G</variation>
    <location>
        <position position="161"/>
    </location>
</feature>
<feature type="sequence variant" description="In strain: 169-98 / Serotype O22.">
    <original>N</original>
    <variation>H</variation>
    <location>
        <position position="211"/>
    </location>
</feature>
<feature type="sequence variant" description="In strain: 169-98 / Serotype O22.">
    <original>G</original>
    <variation>S</variation>
    <location>
        <position position="233"/>
    </location>
</feature>
<feature type="sequence variant" description="In strain: 169-98 / Serotype O22.">
    <original>D</original>
    <variation>E</variation>
    <location>
        <position position="271"/>
    </location>
</feature>
<feature type="sequence variant" description="In strain: 169-98 / Serotype O22.">
    <original>S</original>
    <variation>T</variation>
    <location>
        <position position="299"/>
    </location>
</feature>
<name>HLDD_VIBCH</name>
<proteinExistence type="inferred from homology"/>
<evidence type="ECO:0000255" key="1">
    <source>
        <dbReference type="HAMAP-Rule" id="MF_01601"/>
    </source>
</evidence>
<reference key="1">
    <citation type="journal article" date="1992" name="Proc. Natl. Acad. Sci. U.S.A.">
        <title>Serotype conversion in Vibrio cholerae O1.</title>
        <authorList>
            <person name="Stroeher U.H."/>
            <person name="Karageorgos L.E."/>
            <person name="Morona R."/>
            <person name="Manning P.A."/>
        </authorList>
    </citation>
    <scope>NUCLEOTIDE SEQUENCE [GENOMIC DNA]</scope>
    <source>
        <strain>El Tor O17 / Serotype O1</strain>
    </source>
</reference>
<reference key="2">
    <citation type="journal article" date="1996" name="Mol. Microbiol.">
        <title>Genetic organization and functional analysis of the otn DNA essential for cell-wall polysaccharide synthesis in Vibrio cholerae O139.</title>
        <authorList>
            <person name="Bik E.M."/>
            <person name="Bunschoten A.E."/>
            <person name="Willems R.J.L."/>
            <person name="Chang A.C.Y."/>
            <person name="Mooi F.R."/>
        </authorList>
    </citation>
    <scope>NUCLEOTIDE SEQUENCE [GENOMIC DNA]</scope>
    <source>
        <strain>ATCC 51394 / MO45 / Serotype O139</strain>
    </source>
</reference>
<reference key="3">
    <citation type="submission" date="1998-08" db="EMBL/GenBank/DDBJ databases">
        <authorList>
            <person name="Mooi F.R."/>
        </authorList>
    </citation>
    <scope>SEQUENCE REVISION</scope>
</reference>
<reference key="4">
    <citation type="journal article" date="1997" name="Gene">
        <title>The rfaD locus: a region of rearrangement in Vibrio cholerae O139.</title>
        <authorList>
            <person name="Vimont S."/>
            <person name="Dumontier S."/>
            <person name="Escuyer V."/>
            <person name="Berche P."/>
        </authorList>
    </citation>
    <scope>NUCLEOTIDE SEQUENCE [GENOMIC DNA]</scope>
    <source>
        <strain>ATCC 51394 / MO45 / Serotype O139</strain>
    </source>
</reference>
<reference key="5">
    <citation type="journal article" date="1999" name="Gene">
        <title>The genes responsible for O-antigen synthesis of Vibrio cholerae O139 are closely related to those of Vibrio cholerae O22.</title>
        <authorList>
            <person name="Yamasaki S."/>
            <person name="Shimizu T."/>
            <person name="Hoshino K."/>
            <person name="Ho S.-T."/>
            <person name="Shimada T."/>
            <person name="Nair G.B."/>
            <person name="Takeda Y."/>
        </authorList>
    </citation>
    <scope>NUCLEOTIDE SEQUENCE [GENOMIC DNA]</scope>
    <source>
        <strain>169-98 / Serotype O22</strain>
        <strain>ATCC 51394 / MO45 / Serotype O139</strain>
    </source>
</reference>
<reference key="6">
    <citation type="journal article" date="2000" name="Nature">
        <title>DNA sequence of both chromosomes of the cholera pathogen Vibrio cholerae.</title>
        <authorList>
            <person name="Heidelberg J.F."/>
            <person name="Eisen J.A."/>
            <person name="Nelson W.C."/>
            <person name="Clayton R.A."/>
            <person name="Gwinn M.L."/>
            <person name="Dodson R.J."/>
            <person name="Haft D.H."/>
            <person name="Hickey E.K."/>
            <person name="Peterson J.D."/>
            <person name="Umayam L.A."/>
            <person name="Gill S.R."/>
            <person name="Nelson K.E."/>
            <person name="Read T.D."/>
            <person name="Tettelin H."/>
            <person name="Richardson D.L."/>
            <person name="Ermolaeva M.D."/>
            <person name="Vamathevan J.J."/>
            <person name="Bass S."/>
            <person name="Qin H."/>
            <person name="Dragoi I."/>
            <person name="Sellers P."/>
            <person name="McDonald L.A."/>
            <person name="Utterback T.R."/>
            <person name="Fleischmann R.D."/>
            <person name="Nierman W.C."/>
            <person name="White O."/>
            <person name="Salzberg S.L."/>
            <person name="Smith H.O."/>
            <person name="Colwell R.R."/>
            <person name="Mekalanos J.J."/>
            <person name="Venter J.C."/>
            <person name="Fraser C.M."/>
        </authorList>
    </citation>
    <scope>NUCLEOTIDE SEQUENCE [LARGE SCALE GENOMIC DNA]</scope>
    <source>
        <strain>ATCC 39315 / El Tor Inaba N16961</strain>
    </source>
</reference>
<keyword id="KW-0119">Carbohydrate metabolism</keyword>
<keyword id="KW-0413">Isomerase</keyword>
<keyword id="KW-0521">NADP</keyword>
<keyword id="KW-1185">Reference proteome</keyword>
<accession>Q06963</accession>
<accession>O87143</accession>
<accession>Q57098</accession>
<accession>Q7DCY0</accession>
<gene>
    <name evidence="1" type="primary">hldD</name>
    <name type="synonym">gmhD</name>
    <name type="synonym">rfaD</name>
    <name type="ordered locus">VC_0240</name>
</gene>
<comment type="function">
    <text evidence="1">Catalyzes the interconversion between ADP-D-glycero-beta-D-manno-heptose and ADP-L-glycero-beta-D-manno-heptose via an epimerization at carbon 6 of the heptose.</text>
</comment>
<comment type="catalytic activity">
    <reaction evidence="1">
        <text>ADP-D-glycero-beta-D-manno-heptose = ADP-L-glycero-beta-D-manno-heptose</text>
        <dbReference type="Rhea" id="RHEA:17577"/>
        <dbReference type="ChEBI" id="CHEBI:59967"/>
        <dbReference type="ChEBI" id="CHEBI:61506"/>
        <dbReference type="EC" id="5.1.3.20"/>
    </reaction>
</comment>
<comment type="cofactor">
    <cofactor evidence="1">
        <name>NADP(+)</name>
        <dbReference type="ChEBI" id="CHEBI:58349"/>
    </cofactor>
    <text evidence="1">Binds 1 NADP(+) per subunit.</text>
</comment>
<comment type="pathway">
    <text evidence="1">Nucleotide-sugar biosynthesis; ADP-L-glycero-beta-D-manno-heptose biosynthesis; ADP-L-glycero-beta-D-manno-heptose from D-glycero-beta-D-manno-heptose 7-phosphate: step 4/4.</text>
</comment>
<comment type="pathway">
    <text>Bacterial outer membrane biogenesis; LPS core biosynthesis.</text>
</comment>
<comment type="subunit">
    <text evidence="1">Homopentamer.</text>
</comment>
<comment type="domain">
    <text evidence="1">Contains a large N-terminal NADP-binding domain, and a smaller C-terminal substrate-binding domain.</text>
</comment>
<comment type="similarity">
    <text evidence="1">Belongs to the NAD(P)-dependent epimerase/dehydratase family. HldD subfamily.</text>
</comment>
<sequence length="314" mass="35245">MIIVTGGAGMIGSNIIKALNERGITDILVVDHLKNGRKFKNLVDLQIADYMDRDDFLAQIMAGDDFGFIDAIFHEGACSATTEWDGKYVMLNNYEYSKELLHYCLDREIPFLYASSAATYGETDTFIEEPQYEGALNVYGYSKQQFDNYVRRLWLDAKQHDETLSQITGFRYFNVYGPREQHKGSMASVAFHLNNQMNAGENPKLFAGSENFKRDFVYVGDVAAVNLWFLDHGVSGIFNCGTGKAESFNEVAKAVIAFHGRGEVETIPFPDHLKGAYQEFTEADLTKLRAAGCDVQFKSVAEGVAEYMALINRK</sequence>
<dbReference type="EC" id="5.1.3.20" evidence="1"/>
<dbReference type="EMBL" id="X59554">
    <property type="protein sequence ID" value="CAA42133.1"/>
    <property type="molecule type" value="Genomic_DNA"/>
</dbReference>
<dbReference type="EMBL" id="X90547">
    <property type="protein sequence ID" value="CAA62134.1"/>
    <property type="molecule type" value="Genomic_DNA"/>
</dbReference>
<dbReference type="EMBL" id="U47542">
    <property type="protein sequence ID" value="AAB02641.1"/>
    <property type="molecule type" value="Genomic_DNA"/>
</dbReference>
<dbReference type="EMBL" id="AB012956">
    <property type="protein sequence ID" value="BAA33585.1"/>
    <property type="molecule type" value="Genomic_DNA"/>
</dbReference>
<dbReference type="EMBL" id="AB012957">
    <property type="protein sequence ID" value="BAA36488.1"/>
    <property type="molecule type" value="Genomic_DNA"/>
</dbReference>
<dbReference type="EMBL" id="AE003852">
    <property type="protein sequence ID" value="AAF93416.1"/>
    <property type="molecule type" value="Genomic_DNA"/>
</dbReference>
<dbReference type="PIR" id="JC4066">
    <property type="entry name" value="JC4066"/>
</dbReference>
<dbReference type="PIR" id="T44311">
    <property type="entry name" value="T44311"/>
</dbReference>
<dbReference type="RefSeq" id="NP_229897.1">
    <property type="nucleotide sequence ID" value="NC_002505.1"/>
</dbReference>
<dbReference type="RefSeq" id="WP_000587795.1">
    <property type="nucleotide sequence ID" value="NZ_LT906614.1"/>
</dbReference>
<dbReference type="SMR" id="Q06963"/>
<dbReference type="STRING" id="243277.VC_0240"/>
<dbReference type="DNASU" id="2614708"/>
<dbReference type="EnsemblBacteria" id="AAF93416">
    <property type="protein sequence ID" value="AAF93416"/>
    <property type="gene ID" value="VC_0240"/>
</dbReference>
<dbReference type="KEGG" id="vch:VC_0240"/>
<dbReference type="PATRIC" id="fig|243277.26.peg.221"/>
<dbReference type="eggNOG" id="COG0451">
    <property type="taxonomic scope" value="Bacteria"/>
</dbReference>
<dbReference type="HOGENOM" id="CLU_007383_1_3_6"/>
<dbReference type="UniPathway" id="UPA00356">
    <property type="reaction ID" value="UER00440"/>
</dbReference>
<dbReference type="UniPathway" id="UPA00958"/>
<dbReference type="Proteomes" id="UP000000584">
    <property type="component" value="Chromosome 1"/>
</dbReference>
<dbReference type="GO" id="GO:0008712">
    <property type="term" value="F:ADP-glyceromanno-heptose 6-epimerase activity"/>
    <property type="evidence" value="ECO:0007669"/>
    <property type="project" value="UniProtKB-UniRule"/>
</dbReference>
<dbReference type="GO" id="GO:0050661">
    <property type="term" value="F:NADP binding"/>
    <property type="evidence" value="ECO:0007669"/>
    <property type="project" value="InterPro"/>
</dbReference>
<dbReference type="GO" id="GO:0097171">
    <property type="term" value="P:ADP-L-glycero-beta-D-manno-heptose biosynthetic process"/>
    <property type="evidence" value="ECO:0007669"/>
    <property type="project" value="UniProtKB-UniPathway"/>
</dbReference>
<dbReference type="GO" id="GO:0009244">
    <property type="term" value="P:lipopolysaccharide core region biosynthetic process"/>
    <property type="evidence" value="ECO:0007669"/>
    <property type="project" value="UniProtKB-UniPathway"/>
</dbReference>
<dbReference type="CDD" id="cd05248">
    <property type="entry name" value="ADP_GME_SDR_e"/>
    <property type="match status" value="1"/>
</dbReference>
<dbReference type="Gene3D" id="3.40.50.720">
    <property type="entry name" value="NAD(P)-binding Rossmann-like Domain"/>
    <property type="match status" value="1"/>
</dbReference>
<dbReference type="Gene3D" id="3.90.25.10">
    <property type="entry name" value="UDP-galactose 4-epimerase, domain 1"/>
    <property type="match status" value="1"/>
</dbReference>
<dbReference type="HAMAP" id="MF_01601">
    <property type="entry name" value="Heptose_epimerase"/>
    <property type="match status" value="1"/>
</dbReference>
<dbReference type="InterPro" id="IPR001509">
    <property type="entry name" value="Epimerase_deHydtase"/>
</dbReference>
<dbReference type="InterPro" id="IPR011912">
    <property type="entry name" value="Heptose_epim"/>
</dbReference>
<dbReference type="InterPro" id="IPR036291">
    <property type="entry name" value="NAD(P)-bd_dom_sf"/>
</dbReference>
<dbReference type="NCBIfam" id="TIGR02197">
    <property type="entry name" value="heptose_epim"/>
    <property type="match status" value="1"/>
</dbReference>
<dbReference type="NCBIfam" id="NF008360">
    <property type="entry name" value="PRK11150.1"/>
    <property type="match status" value="1"/>
</dbReference>
<dbReference type="PANTHER" id="PTHR43103:SF3">
    <property type="entry name" value="ADP-L-GLYCERO-D-MANNO-HEPTOSE-6-EPIMERASE"/>
    <property type="match status" value="1"/>
</dbReference>
<dbReference type="PANTHER" id="PTHR43103">
    <property type="entry name" value="NUCLEOSIDE-DIPHOSPHATE-SUGAR EPIMERASE"/>
    <property type="match status" value="1"/>
</dbReference>
<dbReference type="Pfam" id="PF01370">
    <property type="entry name" value="Epimerase"/>
    <property type="match status" value="1"/>
</dbReference>
<dbReference type="SUPFAM" id="SSF51735">
    <property type="entry name" value="NAD(P)-binding Rossmann-fold domains"/>
    <property type="match status" value="1"/>
</dbReference>
<organism>
    <name type="scientific">Vibrio cholerae serotype O1 (strain ATCC 39315 / El Tor Inaba N16961)</name>
    <dbReference type="NCBI Taxonomy" id="243277"/>
    <lineage>
        <taxon>Bacteria</taxon>
        <taxon>Pseudomonadati</taxon>
        <taxon>Pseudomonadota</taxon>
        <taxon>Gammaproteobacteria</taxon>
        <taxon>Vibrionales</taxon>
        <taxon>Vibrionaceae</taxon>
        <taxon>Vibrio</taxon>
    </lineage>
</organism>